<organism>
    <name type="scientific">Bacillus cereus (strain AH820)</name>
    <dbReference type="NCBI Taxonomy" id="405535"/>
    <lineage>
        <taxon>Bacteria</taxon>
        <taxon>Bacillati</taxon>
        <taxon>Bacillota</taxon>
        <taxon>Bacilli</taxon>
        <taxon>Bacillales</taxon>
        <taxon>Bacillaceae</taxon>
        <taxon>Bacillus</taxon>
        <taxon>Bacillus cereus group</taxon>
    </lineage>
</organism>
<name>HIS6_BACC0</name>
<proteinExistence type="inferred from homology"/>
<gene>
    <name evidence="1" type="primary">hisF</name>
    <name type="ordered locus">BCAH820_1501</name>
</gene>
<evidence type="ECO:0000255" key="1">
    <source>
        <dbReference type="HAMAP-Rule" id="MF_01013"/>
    </source>
</evidence>
<comment type="function">
    <text evidence="1">IGPS catalyzes the conversion of PRFAR and glutamine to IGP, AICAR and glutamate. The HisF subunit catalyzes the cyclization activity that produces IGP and AICAR from PRFAR using the ammonia provided by the HisH subunit.</text>
</comment>
<comment type="catalytic activity">
    <reaction evidence="1">
        <text>5-[(5-phospho-1-deoxy-D-ribulos-1-ylimino)methylamino]-1-(5-phospho-beta-D-ribosyl)imidazole-4-carboxamide + L-glutamine = D-erythro-1-(imidazol-4-yl)glycerol 3-phosphate + 5-amino-1-(5-phospho-beta-D-ribosyl)imidazole-4-carboxamide + L-glutamate + H(+)</text>
        <dbReference type="Rhea" id="RHEA:24793"/>
        <dbReference type="ChEBI" id="CHEBI:15378"/>
        <dbReference type="ChEBI" id="CHEBI:29985"/>
        <dbReference type="ChEBI" id="CHEBI:58278"/>
        <dbReference type="ChEBI" id="CHEBI:58359"/>
        <dbReference type="ChEBI" id="CHEBI:58475"/>
        <dbReference type="ChEBI" id="CHEBI:58525"/>
        <dbReference type="EC" id="4.3.2.10"/>
    </reaction>
</comment>
<comment type="pathway">
    <text evidence="1">Amino-acid biosynthesis; L-histidine biosynthesis; L-histidine from 5-phospho-alpha-D-ribose 1-diphosphate: step 5/9.</text>
</comment>
<comment type="subunit">
    <text evidence="1">Heterodimer of HisH and HisF.</text>
</comment>
<comment type="subcellular location">
    <subcellularLocation>
        <location evidence="1">Cytoplasm</location>
    </subcellularLocation>
</comment>
<comment type="similarity">
    <text evidence="1">Belongs to the HisA/HisF family.</text>
</comment>
<keyword id="KW-0028">Amino-acid biosynthesis</keyword>
<keyword id="KW-0963">Cytoplasm</keyword>
<keyword id="KW-0368">Histidine biosynthesis</keyword>
<keyword id="KW-0456">Lyase</keyword>
<feature type="chain" id="PRO_1000134964" description="Imidazole glycerol phosphate synthase subunit HisF">
    <location>
        <begin position="1"/>
        <end position="252"/>
    </location>
</feature>
<feature type="active site" evidence="1">
    <location>
        <position position="11"/>
    </location>
</feature>
<feature type="active site" evidence="1">
    <location>
        <position position="130"/>
    </location>
</feature>
<reference key="1">
    <citation type="submission" date="2008-10" db="EMBL/GenBank/DDBJ databases">
        <title>Genome sequence of Bacillus cereus AH820.</title>
        <authorList>
            <person name="Dodson R.J."/>
            <person name="Durkin A.S."/>
            <person name="Rosovitz M.J."/>
            <person name="Rasko D.A."/>
            <person name="Hoffmaster A."/>
            <person name="Ravel J."/>
            <person name="Sutton G."/>
        </authorList>
    </citation>
    <scope>NUCLEOTIDE SEQUENCE [LARGE SCALE GENOMIC DNA]</scope>
    <source>
        <strain>AH820</strain>
    </source>
</reference>
<sequence length="252" mass="26960">MLAKRIIPCLDVKEGRVVKGVNFIGLQDVGDPVEIAALYNDAGADEIVFLDITATHEGRKTIIDVVEKTASKVFIPLTVGGGISSVKDMYNLLRAGADKVSINSAAVRNPKLIEEGAQHFGSQCIVVAIDARKVAEGKWNVYVNGGRVDTGMDAIEWAKRVVMLGAGEILLTSMDADGTKNGYDLRLTEEISKSVSVPVIASGGCGHADHIIEVFQKTTVDAALAASIFHYGEVTIGDVKRKLRNANVEVRL</sequence>
<dbReference type="EC" id="4.3.2.10" evidence="1"/>
<dbReference type="EMBL" id="CP001283">
    <property type="protein sequence ID" value="ACK92444.1"/>
    <property type="molecule type" value="Genomic_DNA"/>
</dbReference>
<dbReference type="RefSeq" id="WP_000880087.1">
    <property type="nucleotide sequence ID" value="NC_011773.1"/>
</dbReference>
<dbReference type="SMR" id="B7JFZ5"/>
<dbReference type="KEGG" id="bcu:BCAH820_1501"/>
<dbReference type="HOGENOM" id="CLU_048577_4_0_9"/>
<dbReference type="UniPathway" id="UPA00031">
    <property type="reaction ID" value="UER00010"/>
</dbReference>
<dbReference type="Proteomes" id="UP000001363">
    <property type="component" value="Chromosome"/>
</dbReference>
<dbReference type="GO" id="GO:0005737">
    <property type="term" value="C:cytoplasm"/>
    <property type="evidence" value="ECO:0007669"/>
    <property type="project" value="UniProtKB-SubCell"/>
</dbReference>
<dbReference type="GO" id="GO:0000107">
    <property type="term" value="F:imidazoleglycerol-phosphate synthase activity"/>
    <property type="evidence" value="ECO:0007669"/>
    <property type="project" value="UniProtKB-UniRule"/>
</dbReference>
<dbReference type="GO" id="GO:0016829">
    <property type="term" value="F:lyase activity"/>
    <property type="evidence" value="ECO:0007669"/>
    <property type="project" value="UniProtKB-KW"/>
</dbReference>
<dbReference type="GO" id="GO:0000105">
    <property type="term" value="P:L-histidine biosynthetic process"/>
    <property type="evidence" value="ECO:0007669"/>
    <property type="project" value="UniProtKB-UniRule"/>
</dbReference>
<dbReference type="CDD" id="cd04731">
    <property type="entry name" value="HisF"/>
    <property type="match status" value="1"/>
</dbReference>
<dbReference type="FunFam" id="3.20.20.70:FF:000006">
    <property type="entry name" value="Imidazole glycerol phosphate synthase subunit HisF"/>
    <property type="match status" value="1"/>
</dbReference>
<dbReference type="Gene3D" id="3.20.20.70">
    <property type="entry name" value="Aldolase class I"/>
    <property type="match status" value="1"/>
</dbReference>
<dbReference type="HAMAP" id="MF_01013">
    <property type="entry name" value="HisF"/>
    <property type="match status" value="1"/>
</dbReference>
<dbReference type="InterPro" id="IPR013785">
    <property type="entry name" value="Aldolase_TIM"/>
</dbReference>
<dbReference type="InterPro" id="IPR006062">
    <property type="entry name" value="His_biosynth"/>
</dbReference>
<dbReference type="InterPro" id="IPR004651">
    <property type="entry name" value="HisF"/>
</dbReference>
<dbReference type="InterPro" id="IPR050064">
    <property type="entry name" value="IGPS_HisA/HisF"/>
</dbReference>
<dbReference type="InterPro" id="IPR011060">
    <property type="entry name" value="RibuloseP-bd_barrel"/>
</dbReference>
<dbReference type="NCBIfam" id="TIGR00735">
    <property type="entry name" value="hisF"/>
    <property type="match status" value="1"/>
</dbReference>
<dbReference type="PANTHER" id="PTHR21235:SF2">
    <property type="entry name" value="IMIDAZOLE GLYCEROL PHOSPHATE SYNTHASE HISHF"/>
    <property type="match status" value="1"/>
</dbReference>
<dbReference type="PANTHER" id="PTHR21235">
    <property type="entry name" value="IMIDAZOLE GLYCEROL PHOSPHATE SYNTHASE SUBUNIT HISF/H IGP SYNTHASE SUBUNIT HISF/H"/>
    <property type="match status" value="1"/>
</dbReference>
<dbReference type="Pfam" id="PF00977">
    <property type="entry name" value="His_biosynth"/>
    <property type="match status" value="1"/>
</dbReference>
<dbReference type="SUPFAM" id="SSF51366">
    <property type="entry name" value="Ribulose-phoshate binding barrel"/>
    <property type="match status" value="1"/>
</dbReference>
<protein>
    <recommendedName>
        <fullName evidence="1">Imidazole glycerol phosphate synthase subunit HisF</fullName>
        <ecNumber evidence="1">4.3.2.10</ecNumber>
    </recommendedName>
    <alternativeName>
        <fullName evidence="1">IGP synthase cyclase subunit</fullName>
    </alternativeName>
    <alternativeName>
        <fullName evidence="1">IGP synthase subunit HisF</fullName>
    </alternativeName>
    <alternativeName>
        <fullName evidence="1">ImGP synthase subunit HisF</fullName>
        <shortName evidence="1">IGPS subunit HisF</shortName>
    </alternativeName>
</protein>
<accession>B7JFZ5</accession>